<name>RBL_SALPL</name>
<comment type="function">
    <text evidence="1">RuBisCO catalyzes two reactions: the carboxylation of D-ribulose 1,5-bisphosphate, the primary event in carbon dioxide fixation, as well as the oxidative fragmentation of the pentose substrate in the photorespiration process. Both reactions occur simultaneously and in competition at the same active site.</text>
</comment>
<comment type="catalytic activity">
    <reaction evidence="1">
        <text>2 (2R)-3-phosphoglycerate + 2 H(+) = D-ribulose 1,5-bisphosphate + CO2 + H2O</text>
        <dbReference type="Rhea" id="RHEA:23124"/>
        <dbReference type="ChEBI" id="CHEBI:15377"/>
        <dbReference type="ChEBI" id="CHEBI:15378"/>
        <dbReference type="ChEBI" id="CHEBI:16526"/>
        <dbReference type="ChEBI" id="CHEBI:57870"/>
        <dbReference type="ChEBI" id="CHEBI:58272"/>
        <dbReference type="EC" id="4.1.1.39"/>
    </reaction>
</comment>
<comment type="catalytic activity">
    <reaction evidence="1">
        <text>D-ribulose 1,5-bisphosphate + O2 = 2-phosphoglycolate + (2R)-3-phosphoglycerate + 2 H(+)</text>
        <dbReference type="Rhea" id="RHEA:36631"/>
        <dbReference type="ChEBI" id="CHEBI:15378"/>
        <dbReference type="ChEBI" id="CHEBI:15379"/>
        <dbReference type="ChEBI" id="CHEBI:57870"/>
        <dbReference type="ChEBI" id="CHEBI:58033"/>
        <dbReference type="ChEBI" id="CHEBI:58272"/>
    </reaction>
</comment>
<comment type="cofactor">
    <cofactor evidence="1">
        <name>Mg(2+)</name>
        <dbReference type="ChEBI" id="CHEBI:18420"/>
    </cofactor>
    <text evidence="1">Binds 1 Mg(2+) ion per subunit.</text>
</comment>
<comment type="subunit">
    <text evidence="1">Heterohexadecamer of 8 large chains and 8 small chains; disulfide-linked. The disulfide link is formed within the large subunit homodimers.</text>
</comment>
<comment type="subcellular location">
    <subcellularLocation>
        <location>Plastid</location>
        <location>Chloroplast</location>
    </subcellularLocation>
</comment>
<comment type="PTM">
    <text evidence="1">The disulfide bond which can form in the large chain dimeric partners within the hexadecamer appears to be associated with oxidative stress and protein turnover.</text>
</comment>
<comment type="miscellaneous">
    <text evidence="1">The basic functional RuBisCO is composed of a large chain homodimer in a 'head-to-tail' conformation. In form I RuBisCO this homodimer is arranged in a barrel-like tetramer with the small subunits forming a tetrameric 'cap' on each end of the 'barrel'.</text>
</comment>
<comment type="similarity">
    <text evidence="1">Belongs to the RuBisCO large chain family. Type I subfamily.</text>
</comment>
<organism>
    <name type="scientific">Salacia pallescens</name>
    <dbReference type="NCBI Taxonomy" id="4320"/>
    <lineage>
        <taxon>Eukaryota</taxon>
        <taxon>Viridiplantae</taxon>
        <taxon>Streptophyta</taxon>
        <taxon>Embryophyta</taxon>
        <taxon>Tracheophyta</taxon>
        <taxon>Spermatophyta</taxon>
        <taxon>Magnoliopsida</taxon>
        <taxon>eudicotyledons</taxon>
        <taxon>Gunneridae</taxon>
        <taxon>Pentapetalae</taxon>
        <taxon>rosids</taxon>
        <taxon>fabids</taxon>
        <taxon>Celastrales</taxon>
        <taxon>Celastraceae</taxon>
        <taxon>Salacia</taxon>
    </lineage>
</organism>
<keyword id="KW-0007">Acetylation</keyword>
<keyword id="KW-0113">Calvin cycle</keyword>
<keyword id="KW-0120">Carbon dioxide fixation</keyword>
<keyword id="KW-0150">Chloroplast</keyword>
<keyword id="KW-1015">Disulfide bond</keyword>
<keyword id="KW-0456">Lyase</keyword>
<keyword id="KW-0460">Magnesium</keyword>
<keyword id="KW-0479">Metal-binding</keyword>
<keyword id="KW-0488">Methylation</keyword>
<keyword id="KW-0503">Monooxygenase</keyword>
<keyword id="KW-0560">Oxidoreductase</keyword>
<keyword id="KW-0601">Photorespiration</keyword>
<keyword id="KW-0602">Photosynthesis</keyword>
<keyword id="KW-0934">Plastid</keyword>
<feature type="propeptide" id="PRO_0000031397" evidence="1">
    <location>
        <begin position="1"/>
        <end position="2"/>
    </location>
</feature>
<feature type="chain" id="PRO_0000031398" description="Ribulose bisphosphate carboxylase large chain">
    <location>
        <begin position="3"/>
        <end position="449" status="greater than"/>
    </location>
</feature>
<feature type="active site" description="Proton acceptor" evidence="1">
    <location>
        <position position="175"/>
    </location>
</feature>
<feature type="active site" description="Proton acceptor" evidence="1">
    <location>
        <position position="294"/>
    </location>
</feature>
<feature type="binding site" description="in homodimeric partner" evidence="1">
    <location>
        <position position="123"/>
    </location>
    <ligand>
        <name>substrate</name>
    </ligand>
</feature>
<feature type="binding site" evidence="1">
    <location>
        <position position="173"/>
    </location>
    <ligand>
        <name>substrate</name>
    </ligand>
</feature>
<feature type="binding site" evidence="1">
    <location>
        <position position="177"/>
    </location>
    <ligand>
        <name>substrate</name>
    </ligand>
</feature>
<feature type="binding site" description="via carbamate group" evidence="1">
    <location>
        <position position="201"/>
    </location>
    <ligand>
        <name>Mg(2+)</name>
        <dbReference type="ChEBI" id="CHEBI:18420"/>
    </ligand>
</feature>
<feature type="binding site" evidence="1">
    <location>
        <position position="203"/>
    </location>
    <ligand>
        <name>Mg(2+)</name>
        <dbReference type="ChEBI" id="CHEBI:18420"/>
    </ligand>
</feature>
<feature type="binding site" evidence="1">
    <location>
        <position position="204"/>
    </location>
    <ligand>
        <name>Mg(2+)</name>
        <dbReference type="ChEBI" id="CHEBI:18420"/>
    </ligand>
</feature>
<feature type="binding site" evidence="1">
    <location>
        <position position="295"/>
    </location>
    <ligand>
        <name>substrate</name>
    </ligand>
</feature>
<feature type="binding site" evidence="1">
    <location>
        <position position="327"/>
    </location>
    <ligand>
        <name>substrate</name>
    </ligand>
</feature>
<feature type="binding site" evidence="1">
    <location>
        <position position="379"/>
    </location>
    <ligand>
        <name>substrate</name>
    </ligand>
</feature>
<feature type="site" description="Transition state stabilizer" evidence="1">
    <location>
        <position position="334"/>
    </location>
</feature>
<feature type="modified residue" description="N-acetylproline" evidence="1">
    <location>
        <position position="3"/>
    </location>
</feature>
<feature type="modified residue" description="N6,N6,N6-trimethyllysine" evidence="1">
    <location>
        <position position="14"/>
    </location>
</feature>
<feature type="modified residue" description="N6-carboxylysine" evidence="1">
    <location>
        <position position="201"/>
    </location>
</feature>
<feature type="disulfide bond" description="Interchain; in linked form" evidence="1">
    <location>
        <position position="247"/>
    </location>
</feature>
<feature type="non-terminal residue">
    <location>
        <position position="449"/>
    </location>
</feature>
<evidence type="ECO:0000255" key="1">
    <source>
        <dbReference type="HAMAP-Rule" id="MF_01338"/>
    </source>
</evidence>
<protein>
    <recommendedName>
        <fullName evidence="1">Ribulose bisphosphate carboxylase large chain</fullName>
        <shortName evidence="1">RuBisCO large subunit</shortName>
        <ecNumber evidence="1">4.1.1.39</ecNumber>
    </recommendedName>
</protein>
<gene>
    <name evidence="1" type="primary">rbcL</name>
</gene>
<proteinExistence type="inferred from homology"/>
<reference key="1">
    <citation type="submission" date="1995-04" db="EMBL/GenBank/DDBJ databases">
        <authorList>
            <person name="Savolainen V."/>
        </authorList>
    </citation>
    <scope>NUCLEOTIDE SEQUENCE [GENOMIC DNA]</scope>
    <source>
        <strain>Sample SPA2</strain>
    </source>
</reference>
<reference key="2">
    <citation type="journal article" date="1994" name="Mol. Phylogenet. Evol.">
        <title>Molecular phylogeny of families related to Celastrales based on rbcL 5' flanking sequences.</title>
        <authorList>
            <person name="Savolainen V."/>
            <person name="Manen J.F."/>
            <person name="Douzery E.J.P."/>
            <person name="Spichiger R."/>
        </authorList>
    </citation>
    <scope>NUCLEOTIDE SEQUENCE [GENOMIC DNA] OF 1-57</scope>
    <source>
        <strain>Sample SPA2</strain>
    </source>
</reference>
<geneLocation type="chloroplast"/>
<accession>P31202</accession>
<dbReference type="EC" id="4.1.1.39" evidence="1"/>
<dbReference type="EMBL" id="X69754">
    <property type="protein sequence ID" value="CAA49409.3"/>
    <property type="molecule type" value="Genomic_DNA"/>
</dbReference>
<dbReference type="GO" id="GO:0009507">
    <property type="term" value="C:chloroplast"/>
    <property type="evidence" value="ECO:0007669"/>
    <property type="project" value="UniProtKB-SubCell"/>
</dbReference>
<dbReference type="GO" id="GO:0000287">
    <property type="term" value="F:magnesium ion binding"/>
    <property type="evidence" value="ECO:0007669"/>
    <property type="project" value="InterPro"/>
</dbReference>
<dbReference type="GO" id="GO:0004497">
    <property type="term" value="F:monooxygenase activity"/>
    <property type="evidence" value="ECO:0007669"/>
    <property type="project" value="UniProtKB-KW"/>
</dbReference>
<dbReference type="GO" id="GO:0016984">
    <property type="term" value="F:ribulose-bisphosphate carboxylase activity"/>
    <property type="evidence" value="ECO:0007669"/>
    <property type="project" value="UniProtKB-EC"/>
</dbReference>
<dbReference type="GO" id="GO:0009853">
    <property type="term" value="P:photorespiration"/>
    <property type="evidence" value="ECO:0007669"/>
    <property type="project" value="UniProtKB-KW"/>
</dbReference>
<dbReference type="GO" id="GO:0019253">
    <property type="term" value="P:reductive pentose-phosphate cycle"/>
    <property type="evidence" value="ECO:0007669"/>
    <property type="project" value="UniProtKB-KW"/>
</dbReference>
<dbReference type="FunFam" id="3.30.70.150:FF:000001">
    <property type="entry name" value="Ribulose bisphosphate carboxylase large chain"/>
    <property type="match status" value="1"/>
</dbReference>
<dbReference type="Gene3D" id="3.20.20.110">
    <property type="entry name" value="Ribulose bisphosphate carboxylase, large subunit, C-terminal domain"/>
    <property type="match status" value="1"/>
</dbReference>
<dbReference type="Gene3D" id="3.30.70.150">
    <property type="entry name" value="RuBisCO large subunit, N-terminal domain"/>
    <property type="match status" value="1"/>
</dbReference>
<dbReference type="HAMAP" id="MF_01338">
    <property type="entry name" value="RuBisCO_L_type1"/>
    <property type="match status" value="1"/>
</dbReference>
<dbReference type="InterPro" id="IPR033966">
    <property type="entry name" value="RuBisCO"/>
</dbReference>
<dbReference type="InterPro" id="IPR020878">
    <property type="entry name" value="RuBisCo_large_chain_AS"/>
</dbReference>
<dbReference type="InterPro" id="IPR000685">
    <property type="entry name" value="RuBisCO_lsu_C"/>
</dbReference>
<dbReference type="InterPro" id="IPR036376">
    <property type="entry name" value="RuBisCO_lsu_C_sf"/>
</dbReference>
<dbReference type="InterPro" id="IPR017443">
    <property type="entry name" value="RuBisCO_lsu_fd_N"/>
</dbReference>
<dbReference type="InterPro" id="IPR036422">
    <property type="entry name" value="RuBisCO_lsu_N_sf"/>
</dbReference>
<dbReference type="InterPro" id="IPR020888">
    <property type="entry name" value="RuBisCO_lsuI"/>
</dbReference>
<dbReference type="NCBIfam" id="NF003252">
    <property type="entry name" value="PRK04208.1"/>
    <property type="match status" value="1"/>
</dbReference>
<dbReference type="PANTHER" id="PTHR42704">
    <property type="entry name" value="RIBULOSE BISPHOSPHATE CARBOXYLASE"/>
    <property type="match status" value="1"/>
</dbReference>
<dbReference type="PANTHER" id="PTHR42704:SF15">
    <property type="entry name" value="RIBULOSE BISPHOSPHATE CARBOXYLASE LARGE CHAIN"/>
    <property type="match status" value="1"/>
</dbReference>
<dbReference type="Pfam" id="PF00016">
    <property type="entry name" value="RuBisCO_large"/>
    <property type="match status" value="1"/>
</dbReference>
<dbReference type="Pfam" id="PF02788">
    <property type="entry name" value="RuBisCO_large_N"/>
    <property type="match status" value="1"/>
</dbReference>
<dbReference type="SFLD" id="SFLDS00014">
    <property type="entry name" value="RuBisCO"/>
    <property type="match status" value="1"/>
</dbReference>
<dbReference type="SFLD" id="SFLDG00301">
    <property type="entry name" value="RuBisCO-like_proteins"/>
    <property type="match status" value="1"/>
</dbReference>
<dbReference type="SUPFAM" id="SSF51649">
    <property type="entry name" value="RuBisCo, C-terminal domain"/>
    <property type="match status" value="1"/>
</dbReference>
<dbReference type="SUPFAM" id="SSF54966">
    <property type="entry name" value="RuBisCO, large subunit, small (N-terminal) domain"/>
    <property type="match status" value="1"/>
</dbReference>
<dbReference type="PROSITE" id="PS00157">
    <property type="entry name" value="RUBISCO_LARGE"/>
    <property type="match status" value="1"/>
</dbReference>
<sequence>MSPQTETKASVGFKAGVKDYKLTYYTPDYETKDTDILAAFRVTPQPGVPPEEAGAAVAAESSTGTWTTVWTDGLTSLDRYKGRCYGLEPVAGEENQYIAYVAYPLDLFEEGSVTNMFTSIVGNVFGFKALRALRLEDLRIPPAYSKTFQGPPHGIQVERDKLNKYGRPLLGCTIKPKLGLSAKNYGRAVYECLRGGLDFTKDDENVNSQPFMRWRDRFLFCAEALYKAVAETGEIKGHYLNATAGTCEEMIKRAVFARELGVPIVMHDYLTGGFTANTSLAHYCRDNGLLLHIHXXXXXXXXXXKNHGMHFRVLAKALRMSGGDHVHAGTVVGKLEGERDITLGFVDLLRDDFIEKDRSRGIYFTQDWVSLPGVLPVASGGIHVWHMPALTEIFGDDSVLQFGGGTLGHPWGNAPGAVANRVAVEACVQARNEGRDLAREGNXIIREAS</sequence>